<keyword id="KW-0067">ATP-binding</keyword>
<keyword id="KW-0378">Hydrolase</keyword>
<keyword id="KW-0547">Nucleotide-binding</keyword>
<feature type="chain" id="PRO_1000045205" description="5-oxoprolinase subunit A">
    <location>
        <begin position="1"/>
        <end position="256"/>
    </location>
</feature>
<reference key="1">
    <citation type="journal article" date="2007" name="Proc. Natl. Acad. Sci. U.S.A.">
        <title>Genome and proteome of long-chain alkane degrading Geobacillus thermodenitrificans NG80-2 isolated from a deep-subsurface oil reservoir.</title>
        <authorList>
            <person name="Feng L."/>
            <person name="Wang W."/>
            <person name="Cheng J."/>
            <person name="Ren Y."/>
            <person name="Zhao G."/>
            <person name="Gao C."/>
            <person name="Tang Y."/>
            <person name="Liu X."/>
            <person name="Han W."/>
            <person name="Peng X."/>
            <person name="Liu R."/>
            <person name="Wang L."/>
        </authorList>
    </citation>
    <scope>NUCLEOTIDE SEQUENCE [LARGE SCALE GENOMIC DNA]</scope>
    <source>
        <strain>NG80-2</strain>
    </source>
</reference>
<protein>
    <recommendedName>
        <fullName evidence="1">5-oxoprolinase subunit A</fullName>
        <shortName evidence="1">5-OPase subunit A</shortName>
        <ecNumber evidence="1">3.5.2.9</ecNumber>
    </recommendedName>
    <alternativeName>
        <fullName evidence="1">5-oxoprolinase (ATP-hydrolyzing) subunit A</fullName>
    </alternativeName>
</protein>
<name>PXPA_GEOTN</name>
<organism>
    <name type="scientific">Geobacillus thermodenitrificans (strain NG80-2)</name>
    <dbReference type="NCBI Taxonomy" id="420246"/>
    <lineage>
        <taxon>Bacteria</taxon>
        <taxon>Bacillati</taxon>
        <taxon>Bacillota</taxon>
        <taxon>Bacilli</taxon>
        <taxon>Bacillales</taxon>
        <taxon>Anoxybacillaceae</taxon>
        <taxon>Geobacillus</taxon>
    </lineage>
</organism>
<gene>
    <name evidence="1" type="primary">pxpA</name>
    <name type="ordered locus">GTNG_1353</name>
</gene>
<evidence type="ECO:0000255" key="1">
    <source>
        <dbReference type="HAMAP-Rule" id="MF_00691"/>
    </source>
</evidence>
<accession>A4IN19</accession>
<dbReference type="EC" id="3.5.2.9" evidence="1"/>
<dbReference type="EMBL" id="CP000557">
    <property type="protein sequence ID" value="ABO66723.1"/>
    <property type="molecule type" value="Genomic_DNA"/>
</dbReference>
<dbReference type="RefSeq" id="WP_008879362.1">
    <property type="nucleotide sequence ID" value="NC_009328.1"/>
</dbReference>
<dbReference type="SMR" id="A4IN19"/>
<dbReference type="KEGG" id="gtn:GTNG_1353"/>
<dbReference type="eggNOG" id="COG1540">
    <property type="taxonomic scope" value="Bacteria"/>
</dbReference>
<dbReference type="HOGENOM" id="CLU_069535_0_0_9"/>
<dbReference type="Proteomes" id="UP000001578">
    <property type="component" value="Chromosome"/>
</dbReference>
<dbReference type="GO" id="GO:0017168">
    <property type="term" value="F:5-oxoprolinase (ATP-hydrolyzing) activity"/>
    <property type="evidence" value="ECO:0007669"/>
    <property type="project" value="UniProtKB-UniRule"/>
</dbReference>
<dbReference type="GO" id="GO:0005524">
    <property type="term" value="F:ATP binding"/>
    <property type="evidence" value="ECO:0007669"/>
    <property type="project" value="UniProtKB-UniRule"/>
</dbReference>
<dbReference type="GO" id="GO:0005975">
    <property type="term" value="P:carbohydrate metabolic process"/>
    <property type="evidence" value="ECO:0007669"/>
    <property type="project" value="InterPro"/>
</dbReference>
<dbReference type="CDD" id="cd10787">
    <property type="entry name" value="LamB_YcsF_like"/>
    <property type="match status" value="1"/>
</dbReference>
<dbReference type="Gene3D" id="3.20.20.370">
    <property type="entry name" value="Glycoside hydrolase/deacetylase"/>
    <property type="match status" value="1"/>
</dbReference>
<dbReference type="HAMAP" id="MF_00691">
    <property type="entry name" value="PxpA"/>
    <property type="match status" value="1"/>
</dbReference>
<dbReference type="InterPro" id="IPR011330">
    <property type="entry name" value="Glyco_hydro/deAcase_b/a-brl"/>
</dbReference>
<dbReference type="InterPro" id="IPR005501">
    <property type="entry name" value="LamB/YcsF/PxpA-like"/>
</dbReference>
<dbReference type="NCBIfam" id="NF003814">
    <property type="entry name" value="PRK05406.1-3"/>
    <property type="match status" value="1"/>
</dbReference>
<dbReference type="NCBIfam" id="NF003816">
    <property type="entry name" value="PRK05406.1-5"/>
    <property type="match status" value="1"/>
</dbReference>
<dbReference type="PANTHER" id="PTHR30292:SF0">
    <property type="entry name" value="5-OXOPROLINASE SUBUNIT A"/>
    <property type="match status" value="1"/>
</dbReference>
<dbReference type="PANTHER" id="PTHR30292">
    <property type="entry name" value="UNCHARACTERIZED PROTEIN YBGL-RELATED"/>
    <property type="match status" value="1"/>
</dbReference>
<dbReference type="Pfam" id="PF03746">
    <property type="entry name" value="LamB_YcsF"/>
    <property type="match status" value="1"/>
</dbReference>
<dbReference type="SUPFAM" id="SSF88713">
    <property type="entry name" value="Glycoside hydrolase/deacetylase"/>
    <property type="match status" value="1"/>
</dbReference>
<proteinExistence type="inferred from homology"/>
<sequence length="256" mass="27731">MKTIDLNCDFGESFGVYRLGKEEILPYITSVNIACGFHAGDPLVMRQTVQLAIRHGVAIGAHPGFPDLLGFGRRMMAVSPEEVYAYVVYQIGALAAFVKAEGGVMTHVKPHGALYNMAAKDARISEAIAKAVYDVDPTLILYGLAGSELIRAGQAQGLQTASEVFADRTYQADGSLTPRSDPQAIIADEDEAVKQVLMMVCDRHVRSVQGTAVAIEADTVCLHGDNEQAVRFAKRLHAALQNEGIAIQAMRKETRR</sequence>
<comment type="function">
    <text evidence="1">Catalyzes the cleavage of 5-oxoproline to form L-glutamate coupled to the hydrolysis of ATP to ADP and inorganic phosphate.</text>
</comment>
<comment type="catalytic activity">
    <reaction evidence="1">
        <text>5-oxo-L-proline + ATP + 2 H2O = L-glutamate + ADP + phosphate + H(+)</text>
        <dbReference type="Rhea" id="RHEA:10348"/>
        <dbReference type="ChEBI" id="CHEBI:15377"/>
        <dbReference type="ChEBI" id="CHEBI:15378"/>
        <dbReference type="ChEBI" id="CHEBI:29985"/>
        <dbReference type="ChEBI" id="CHEBI:30616"/>
        <dbReference type="ChEBI" id="CHEBI:43474"/>
        <dbReference type="ChEBI" id="CHEBI:58402"/>
        <dbReference type="ChEBI" id="CHEBI:456216"/>
        <dbReference type="EC" id="3.5.2.9"/>
    </reaction>
</comment>
<comment type="subunit">
    <text evidence="1">Forms a complex composed of PxpA, PxpB and PxpC.</text>
</comment>
<comment type="similarity">
    <text evidence="1">Belongs to the LamB/PxpA family.</text>
</comment>